<sequence length="661" mass="70941">MSLNLAALAQAANEARGLGMDAVEKAASGHLGLPLGCAELGATLFGHAFRYNPDKPEWLNRDIFVLSAGHGSMFLYAWLHLSGYKVSLDDIKQFRQLSSTTPGHPEFRDTPGVEATTGPLGQGVGNGLGYAVACKMAQAHFNTKDHKIFDQKVVVLAGDGCLQEGVAQEASALAGHLHLDNLIIFYDSNDVTLDAMAIESQSEDTAKRYEAYGFEVVTVKEGHNIERILEAYEHAKNSTSGKPQLIILKTTIAKGITEVAGTNKGHGEAGVKFVAAARKGLGLPEEKFFVSKGTRDYFQAHKEKLQKEYASWEKLYSEWRSANPELAALLDSAKVTPDASKLFSVIPKFADAPIATRKAGSDVLQPLAKALPLFISGSADLHGSTLNYIAGAGDYTPKNTGGRNIKFGIREHAMGAMLNGFAYHGIFRPSGATFLVFSDYLRPSIRLAALSHLPVIYIFTHDSVAVGEDGPTHQPVETVSSLRLIPNLDVIRPGDHEETAGAFVAALSRTTGPTLLALCRQNLPNLSQFDVNARREGVLKGGYILQKETGALKVIVISTGSELNVAVEAAKRLGDGVRVVSMPSTYRFDQQPAEYKEEVLPSSCKKRVVIEAGVTPLWHKYVGLEGKIIGIDRFGTSAPGATVLKTLGITADAVVAAANSF</sequence>
<accession>A6YB01</accession>
<gene>
    <name type="primary">tkt</name>
</gene>
<organism>
    <name type="scientific">Physarum polycephalum</name>
    <name type="common">Slime mold</name>
    <dbReference type="NCBI Taxonomy" id="5791"/>
    <lineage>
        <taxon>Eukaryota</taxon>
        <taxon>Amoebozoa</taxon>
        <taxon>Evosea</taxon>
        <taxon>Eumycetozoa</taxon>
        <taxon>Myxogastria</taxon>
        <taxon>Myxogastromycetidae</taxon>
        <taxon>Physariida</taxon>
        <taxon>Physaraceae</taxon>
        <taxon>Physarum</taxon>
    </lineage>
</organism>
<comment type="function">
    <text evidence="1">Catalyzes the transfer of a two-carbon ketol group from a ketose donor to an aldose acceptor, via a covalent intermediate with the cofactor thiamine pyrophosphate.</text>
</comment>
<comment type="catalytic activity">
    <reaction>
        <text>D-sedoheptulose 7-phosphate + D-glyceraldehyde 3-phosphate = aldehydo-D-ribose 5-phosphate + D-xylulose 5-phosphate</text>
        <dbReference type="Rhea" id="RHEA:10508"/>
        <dbReference type="ChEBI" id="CHEBI:57483"/>
        <dbReference type="ChEBI" id="CHEBI:57737"/>
        <dbReference type="ChEBI" id="CHEBI:58273"/>
        <dbReference type="ChEBI" id="CHEBI:59776"/>
        <dbReference type="EC" id="2.2.1.1"/>
    </reaction>
</comment>
<comment type="cofactor">
    <cofactor evidence="1">
        <name>Mg(2+)</name>
        <dbReference type="ChEBI" id="CHEBI:18420"/>
    </cofactor>
    <cofactor evidence="1">
        <name>Ca(2+)</name>
        <dbReference type="ChEBI" id="CHEBI:29108"/>
    </cofactor>
    <cofactor evidence="1">
        <name>Mn(2+)</name>
        <dbReference type="ChEBI" id="CHEBI:29035"/>
    </cofactor>
    <cofactor evidence="1">
        <name>Co(2+)</name>
        <dbReference type="ChEBI" id="CHEBI:48828"/>
    </cofactor>
    <text evidence="1">Binds 1 Mg(2+) ion per subunit. Can also utilize other divalent metal cations, such as Ca(2+), Mn(2+) and Co(2+).</text>
</comment>
<comment type="cofactor">
    <cofactor evidence="1">
        <name>thiamine diphosphate</name>
        <dbReference type="ChEBI" id="CHEBI:58937"/>
    </cofactor>
    <text evidence="1">Binds 1 thiamine pyrophosphate per subunit.</text>
</comment>
<comment type="subunit">
    <text evidence="1">Homodimer.</text>
</comment>
<comment type="similarity">
    <text evidence="3">Belongs to the transketolase family.</text>
</comment>
<keyword id="KW-0106">Calcium</keyword>
<keyword id="KW-0460">Magnesium</keyword>
<keyword id="KW-0479">Metal-binding</keyword>
<keyword id="KW-0786">Thiamine pyrophosphate</keyword>
<keyword id="KW-0808">Transferase</keyword>
<proteinExistence type="evidence at transcript level"/>
<name>TKT_PHYPO</name>
<dbReference type="EC" id="2.2.1.1"/>
<dbReference type="EMBL" id="EF216684">
    <property type="protein sequence ID" value="ABQ23348.1"/>
    <property type="molecule type" value="mRNA"/>
</dbReference>
<dbReference type="SMR" id="A6YB01"/>
<dbReference type="GO" id="GO:0005829">
    <property type="term" value="C:cytosol"/>
    <property type="evidence" value="ECO:0007669"/>
    <property type="project" value="TreeGrafter"/>
</dbReference>
<dbReference type="GO" id="GO:0046872">
    <property type="term" value="F:metal ion binding"/>
    <property type="evidence" value="ECO:0007669"/>
    <property type="project" value="UniProtKB-KW"/>
</dbReference>
<dbReference type="GO" id="GO:0004802">
    <property type="term" value="F:transketolase activity"/>
    <property type="evidence" value="ECO:0007669"/>
    <property type="project" value="UniProtKB-EC"/>
</dbReference>
<dbReference type="GO" id="GO:0006098">
    <property type="term" value="P:pentose-phosphate shunt"/>
    <property type="evidence" value="ECO:0007669"/>
    <property type="project" value="TreeGrafter"/>
</dbReference>
<dbReference type="CDD" id="cd07033">
    <property type="entry name" value="TPP_PYR_DXS_TK_like"/>
    <property type="match status" value="1"/>
</dbReference>
<dbReference type="CDD" id="cd02012">
    <property type="entry name" value="TPP_TK"/>
    <property type="match status" value="1"/>
</dbReference>
<dbReference type="FunFam" id="3.40.50.920:FF:000003">
    <property type="entry name" value="Transketolase"/>
    <property type="match status" value="1"/>
</dbReference>
<dbReference type="FunFam" id="3.40.50.970:FF:000004">
    <property type="entry name" value="Transketolase"/>
    <property type="match status" value="1"/>
</dbReference>
<dbReference type="FunFam" id="3.40.50.970:FF:000076">
    <property type="entry name" value="Transketolase"/>
    <property type="match status" value="1"/>
</dbReference>
<dbReference type="Gene3D" id="3.40.50.920">
    <property type="match status" value="1"/>
</dbReference>
<dbReference type="Gene3D" id="3.40.50.970">
    <property type="match status" value="2"/>
</dbReference>
<dbReference type="InterPro" id="IPR029061">
    <property type="entry name" value="THDP-binding"/>
</dbReference>
<dbReference type="InterPro" id="IPR009014">
    <property type="entry name" value="Transketo_C/PFOR_II"/>
</dbReference>
<dbReference type="InterPro" id="IPR055152">
    <property type="entry name" value="Transketolase-like_C_2"/>
</dbReference>
<dbReference type="InterPro" id="IPR005475">
    <property type="entry name" value="Transketolase-like_Pyr-bd"/>
</dbReference>
<dbReference type="InterPro" id="IPR005478">
    <property type="entry name" value="Transketolase_bac-like"/>
</dbReference>
<dbReference type="InterPro" id="IPR020826">
    <property type="entry name" value="Transketolase_BS"/>
</dbReference>
<dbReference type="InterPro" id="IPR049557">
    <property type="entry name" value="Transketolase_CS"/>
</dbReference>
<dbReference type="InterPro" id="IPR033247">
    <property type="entry name" value="Transketolase_fam"/>
</dbReference>
<dbReference type="InterPro" id="IPR005474">
    <property type="entry name" value="Transketolase_N"/>
</dbReference>
<dbReference type="NCBIfam" id="TIGR00232">
    <property type="entry name" value="tktlase_bact"/>
    <property type="match status" value="1"/>
</dbReference>
<dbReference type="PANTHER" id="PTHR43522">
    <property type="entry name" value="TRANSKETOLASE"/>
    <property type="match status" value="1"/>
</dbReference>
<dbReference type="PANTHER" id="PTHR43522:SF10">
    <property type="entry name" value="TRANSKETOLASE"/>
    <property type="match status" value="1"/>
</dbReference>
<dbReference type="Pfam" id="PF02779">
    <property type="entry name" value="Transket_pyr"/>
    <property type="match status" value="1"/>
</dbReference>
<dbReference type="Pfam" id="PF22613">
    <property type="entry name" value="Transketolase_C_1"/>
    <property type="match status" value="1"/>
</dbReference>
<dbReference type="Pfam" id="PF00456">
    <property type="entry name" value="Transketolase_N"/>
    <property type="match status" value="1"/>
</dbReference>
<dbReference type="SMART" id="SM00861">
    <property type="entry name" value="Transket_pyr"/>
    <property type="match status" value="1"/>
</dbReference>
<dbReference type="SUPFAM" id="SSF52518">
    <property type="entry name" value="Thiamin diphosphate-binding fold (THDP-binding)"/>
    <property type="match status" value="2"/>
</dbReference>
<dbReference type="SUPFAM" id="SSF52922">
    <property type="entry name" value="TK C-terminal domain-like"/>
    <property type="match status" value="1"/>
</dbReference>
<dbReference type="PROSITE" id="PS00801">
    <property type="entry name" value="TRANSKETOLASE_1"/>
    <property type="match status" value="1"/>
</dbReference>
<dbReference type="PROSITE" id="PS00802">
    <property type="entry name" value="TRANSKETOLASE_2"/>
    <property type="match status" value="1"/>
</dbReference>
<evidence type="ECO:0000250" key="1"/>
<evidence type="ECO:0000256" key="2">
    <source>
        <dbReference type="SAM" id="MobiDB-lite"/>
    </source>
</evidence>
<evidence type="ECO:0000305" key="3"/>
<feature type="chain" id="PRO_0000331221" description="Transketolase">
    <location>
        <begin position="1"/>
        <end position="661"/>
    </location>
</feature>
<feature type="region of interest" description="Disordered" evidence="2">
    <location>
        <begin position="99"/>
        <end position="118"/>
    </location>
</feature>
<feature type="active site" description="Proton donor" evidence="1">
    <location>
        <position position="411"/>
    </location>
</feature>
<feature type="binding site" evidence="1">
    <location>
        <position position="30"/>
    </location>
    <ligand>
        <name>substrate</name>
    </ligand>
</feature>
<feature type="binding site" evidence="1">
    <location>
        <position position="70"/>
    </location>
    <ligand>
        <name>thiamine diphosphate</name>
        <dbReference type="ChEBI" id="CHEBI:58937"/>
    </ligand>
</feature>
<feature type="binding site" evidence="1">
    <location>
        <begin position="118"/>
        <end position="120"/>
    </location>
    <ligand>
        <name>thiamine diphosphate</name>
        <dbReference type="ChEBI" id="CHEBI:58937"/>
    </ligand>
</feature>
<feature type="binding site" evidence="1">
    <location>
        <position position="159"/>
    </location>
    <ligand>
        <name>Mg(2+)</name>
        <dbReference type="ChEBI" id="CHEBI:18420"/>
    </ligand>
</feature>
<feature type="binding site" evidence="1">
    <location>
        <position position="160"/>
    </location>
    <ligand>
        <name>thiamine diphosphate</name>
        <dbReference type="ChEBI" id="CHEBI:58937"/>
    </ligand>
</feature>
<feature type="binding site" evidence="1">
    <location>
        <position position="189"/>
    </location>
    <ligand>
        <name>Mg(2+)</name>
        <dbReference type="ChEBI" id="CHEBI:18420"/>
    </ligand>
</feature>
<feature type="binding site" evidence="1">
    <location>
        <position position="189"/>
    </location>
    <ligand>
        <name>thiamine diphosphate</name>
        <dbReference type="ChEBI" id="CHEBI:58937"/>
    </ligand>
</feature>
<feature type="binding site" evidence="1">
    <location>
        <position position="191"/>
    </location>
    <ligand>
        <name>Mg(2+)</name>
        <dbReference type="ChEBI" id="CHEBI:18420"/>
    </ligand>
</feature>
<feature type="binding site" evidence="1">
    <location>
        <position position="266"/>
    </location>
    <ligand>
        <name>substrate</name>
    </ligand>
</feature>
<feature type="binding site" evidence="1">
    <location>
        <position position="266"/>
    </location>
    <ligand>
        <name>thiamine diphosphate</name>
        <dbReference type="ChEBI" id="CHEBI:58937"/>
    </ligand>
</feature>
<feature type="binding site" evidence="1">
    <location>
        <position position="357"/>
    </location>
    <ligand>
        <name>substrate</name>
    </ligand>
</feature>
<feature type="binding site" evidence="1">
    <location>
        <position position="384"/>
    </location>
    <ligand>
        <name>substrate</name>
    </ligand>
</feature>
<feature type="binding site" evidence="1">
    <location>
        <position position="437"/>
    </location>
    <ligand>
        <name>thiamine diphosphate</name>
        <dbReference type="ChEBI" id="CHEBI:58937"/>
    </ligand>
</feature>
<feature type="binding site" evidence="1">
    <location>
        <position position="461"/>
    </location>
    <ligand>
        <name>substrate</name>
    </ligand>
</feature>
<feature type="binding site" evidence="1">
    <location>
        <position position="469"/>
    </location>
    <ligand>
        <name>substrate</name>
    </ligand>
</feature>
<feature type="binding site" evidence="1">
    <location>
        <position position="520"/>
    </location>
    <ligand>
        <name>substrate</name>
    </ligand>
</feature>
<feature type="site" description="Important for catalytic activity" evidence="1">
    <location>
        <position position="30"/>
    </location>
</feature>
<feature type="site" description="Important for catalytic activity" evidence="1">
    <location>
        <position position="266"/>
    </location>
</feature>
<reference key="1">
    <citation type="journal article" date="2007" name="BMC Evol. Biol.">
        <title>A complex and punctate distribution of three eukaryotic genes derived by lateral gene transfer.</title>
        <authorList>
            <person name="Rogers M.B."/>
            <person name="Watkins R.F."/>
            <person name="Harper J.T."/>
            <person name="Durnford D.G."/>
            <person name="Gray M.W."/>
            <person name="Keeling P.J."/>
        </authorList>
    </citation>
    <scope>NUCLEOTIDE SEQUENCE [MRNA]</scope>
</reference>
<protein>
    <recommendedName>
        <fullName>Transketolase</fullName>
        <shortName>TK</shortName>
        <ecNumber>2.2.1.1</ecNumber>
    </recommendedName>
</protein>